<gene>
    <name evidence="1" type="primary">MDE1</name>
    <name type="ordered locus">Pa_1_7680</name>
    <name type="ORF">PODANS_1_7680</name>
</gene>
<accession>B2A8X1</accession>
<accession>A0A090CDD8</accession>
<protein>
    <recommendedName>
        <fullName evidence="1">Methylthioribulose-1-phosphate dehydratase</fullName>
        <shortName evidence="1">MTRu-1-P dehydratase</shortName>
        <ecNumber evidence="1">4.2.1.109</ecNumber>
    </recommendedName>
</protein>
<reference key="1">
    <citation type="journal article" date="2008" name="Genome Biol.">
        <title>The genome sequence of the model ascomycete fungus Podospora anserina.</title>
        <authorList>
            <person name="Espagne E."/>
            <person name="Lespinet O."/>
            <person name="Malagnac F."/>
            <person name="Da Silva C."/>
            <person name="Jaillon O."/>
            <person name="Porcel B.M."/>
            <person name="Couloux A."/>
            <person name="Aury J.-M."/>
            <person name="Segurens B."/>
            <person name="Poulain J."/>
            <person name="Anthouard V."/>
            <person name="Grossetete S."/>
            <person name="Khalili H."/>
            <person name="Coppin E."/>
            <person name="Dequard-Chablat M."/>
            <person name="Picard M."/>
            <person name="Contamine V."/>
            <person name="Arnaise S."/>
            <person name="Bourdais A."/>
            <person name="Berteaux-Lecellier V."/>
            <person name="Gautheret D."/>
            <person name="de Vries R.P."/>
            <person name="Battaglia E."/>
            <person name="Coutinho P.M."/>
            <person name="Danchin E.G.J."/>
            <person name="Henrissat B."/>
            <person name="El Khoury R."/>
            <person name="Sainsard-Chanet A."/>
            <person name="Boivin A."/>
            <person name="Pinan-Lucarre B."/>
            <person name="Sellem C.H."/>
            <person name="Debuchy R."/>
            <person name="Wincker P."/>
            <person name="Weissenbach J."/>
            <person name="Silar P."/>
        </authorList>
    </citation>
    <scope>NUCLEOTIDE SEQUENCE [LARGE SCALE GENOMIC DNA]</scope>
    <source>
        <strain>S / ATCC MYA-4624 / DSM 980 / FGSC 10383</strain>
    </source>
</reference>
<reference key="2">
    <citation type="journal article" date="2014" name="Genetics">
        <title>Maintaining two mating types: Structure of the mating type locus and its role in heterokaryosis in Podospora anserina.</title>
        <authorList>
            <person name="Grognet P."/>
            <person name="Bidard F."/>
            <person name="Kuchly C."/>
            <person name="Tong L.C.H."/>
            <person name="Coppin E."/>
            <person name="Benkhali J.A."/>
            <person name="Couloux A."/>
            <person name="Wincker P."/>
            <person name="Debuchy R."/>
            <person name="Silar P."/>
        </authorList>
    </citation>
    <scope>GENOME REANNOTATION</scope>
    <source>
        <strain>S / ATCC MYA-4624 / DSM 980 / FGSC 10383</strain>
    </source>
</reference>
<name>MTNB_PODAN</name>
<proteinExistence type="inferred from homology"/>
<feature type="chain" id="PRO_0000393843" description="Methylthioribulose-1-phosphate dehydratase">
    <location>
        <begin position="1"/>
        <end position="260"/>
    </location>
</feature>
<feature type="region of interest" description="Disordered" evidence="2">
    <location>
        <begin position="1"/>
        <end position="26"/>
    </location>
</feature>
<feature type="compositionally biased region" description="Basic and acidic residues" evidence="2">
    <location>
        <begin position="16"/>
        <end position="26"/>
    </location>
</feature>
<feature type="active site" description="Proton donor/acceptor" evidence="1">
    <location>
        <position position="154"/>
    </location>
</feature>
<feature type="binding site" evidence="1">
    <location>
        <position position="109"/>
    </location>
    <ligand>
        <name>substrate</name>
    </ligand>
</feature>
<feature type="binding site" evidence="1">
    <location>
        <position position="127"/>
    </location>
    <ligand>
        <name>Zn(2+)</name>
        <dbReference type="ChEBI" id="CHEBI:29105"/>
    </ligand>
</feature>
<feature type="binding site" evidence="1">
    <location>
        <position position="129"/>
    </location>
    <ligand>
        <name>Zn(2+)</name>
        <dbReference type="ChEBI" id="CHEBI:29105"/>
    </ligand>
</feature>
<feature type="binding site" evidence="1">
    <location>
        <position position="211"/>
    </location>
    <ligand>
        <name>Zn(2+)</name>
        <dbReference type="ChEBI" id="CHEBI:29105"/>
    </ligand>
</feature>
<evidence type="ECO:0000255" key="1">
    <source>
        <dbReference type="HAMAP-Rule" id="MF_03116"/>
    </source>
</evidence>
<evidence type="ECO:0000256" key="2">
    <source>
        <dbReference type="SAM" id="MobiDB-lite"/>
    </source>
</evidence>
<comment type="function">
    <text evidence="1">Catalyzes the dehydration of methylthioribulose-1-phosphate (MTRu-1-P) into 2,3-diketo-5-methylthiopentyl-1-phosphate (DK-MTP-1-P).</text>
</comment>
<comment type="catalytic activity">
    <reaction evidence="1">
        <text>5-(methylsulfanyl)-D-ribulose 1-phosphate = 5-methylsulfanyl-2,3-dioxopentyl phosphate + H2O</text>
        <dbReference type="Rhea" id="RHEA:15549"/>
        <dbReference type="ChEBI" id="CHEBI:15377"/>
        <dbReference type="ChEBI" id="CHEBI:58548"/>
        <dbReference type="ChEBI" id="CHEBI:58828"/>
        <dbReference type="EC" id="4.2.1.109"/>
    </reaction>
</comment>
<comment type="cofactor">
    <cofactor evidence="1">
        <name>Zn(2+)</name>
        <dbReference type="ChEBI" id="CHEBI:29105"/>
    </cofactor>
    <text evidence="1">Binds 1 zinc ion per subunit.</text>
</comment>
<comment type="pathway">
    <text evidence="1">Amino-acid biosynthesis; L-methionine biosynthesis via salvage pathway; L-methionine from S-methyl-5-thio-alpha-D-ribose 1-phosphate: step 2/6.</text>
</comment>
<comment type="subcellular location">
    <subcellularLocation>
        <location evidence="1">Cytoplasm</location>
    </subcellularLocation>
</comment>
<comment type="similarity">
    <text evidence="1">Belongs to the aldolase class II family. MtnB subfamily.</text>
</comment>
<organism>
    <name type="scientific">Podospora anserina (strain S / ATCC MYA-4624 / DSM 980 / FGSC 10383)</name>
    <name type="common">Pleurage anserina</name>
    <dbReference type="NCBI Taxonomy" id="515849"/>
    <lineage>
        <taxon>Eukaryota</taxon>
        <taxon>Fungi</taxon>
        <taxon>Dikarya</taxon>
        <taxon>Ascomycota</taxon>
        <taxon>Pezizomycotina</taxon>
        <taxon>Sordariomycetes</taxon>
        <taxon>Sordariomycetidae</taxon>
        <taxon>Sordariales</taxon>
        <taxon>Podosporaceae</taxon>
        <taxon>Podospora</taxon>
        <taxon>Podospora anserina</taxon>
    </lineage>
</organism>
<keyword id="KW-0028">Amino-acid biosynthesis</keyword>
<keyword id="KW-0963">Cytoplasm</keyword>
<keyword id="KW-0456">Lyase</keyword>
<keyword id="KW-0479">Metal-binding</keyword>
<keyword id="KW-0486">Methionine biosynthesis</keyword>
<keyword id="KW-1185">Reference proteome</keyword>
<keyword id="KW-0862">Zinc</keyword>
<dbReference type="EC" id="4.2.1.109" evidence="1"/>
<dbReference type="EMBL" id="CU633438">
    <property type="protein sequence ID" value="CAP60472.1"/>
    <property type="molecule type" value="Genomic_DNA"/>
</dbReference>
<dbReference type="EMBL" id="FO904936">
    <property type="protein sequence ID" value="CDP23117.1"/>
    <property type="molecule type" value="Genomic_DNA"/>
</dbReference>
<dbReference type="RefSeq" id="XP_001912990.1">
    <property type="nucleotide sequence ID" value="XM_001912955.1"/>
</dbReference>
<dbReference type="SMR" id="B2A8X1"/>
<dbReference type="FunCoup" id="B2A8X1">
    <property type="interactions" value="244"/>
</dbReference>
<dbReference type="STRING" id="515849.B2A8X1"/>
<dbReference type="GeneID" id="6197552"/>
<dbReference type="KEGG" id="pan:PODANSg10039"/>
<dbReference type="VEuPathDB" id="FungiDB:PODANS_1_7680"/>
<dbReference type="eggNOG" id="KOG2631">
    <property type="taxonomic scope" value="Eukaryota"/>
</dbReference>
<dbReference type="HOGENOM" id="CLU_006033_4_0_1"/>
<dbReference type="InParanoid" id="B2A8X1"/>
<dbReference type="OrthoDB" id="191080at2759"/>
<dbReference type="UniPathway" id="UPA00904">
    <property type="reaction ID" value="UER00875"/>
</dbReference>
<dbReference type="Proteomes" id="UP000001197">
    <property type="component" value="Chromosome 1"/>
</dbReference>
<dbReference type="GO" id="GO:0005737">
    <property type="term" value="C:cytoplasm"/>
    <property type="evidence" value="ECO:0007669"/>
    <property type="project" value="UniProtKB-SubCell"/>
</dbReference>
<dbReference type="GO" id="GO:0046570">
    <property type="term" value="F:methylthioribulose 1-phosphate dehydratase activity"/>
    <property type="evidence" value="ECO:0007669"/>
    <property type="project" value="UniProtKB-UniRule"/>
</dbReference>
<dbReference type="GO" id="GO:0008270">
    <property type="term" value="F:zinc ion binding"/>
    <property type="evidence" value="ECO:0007669"/>
    <property type="project" value="UniProtKB-UniRule"/>
</dbReference>
<dbReference type="GO" id="GO:0019509">
    <property type="term" value="P:L-methionine salvage from methylthioadenosine"/>
    <property type="evidence" value="ECO:0007669"/>
    <property type="project" value="UniProtKB-UniRule"/>
</dbReference>
<dbReference type="FunFam" id="3.40.225.10:FF:000003">
    <property type="entry name" value="Methylthioribulose-1-phosphate dehydratase"/>
    <property type="match status" value="1"/>
</dbReference>
<dbReference type="Gene3D" id="3.40.225.10">
    <property type="entry name" value="Class II aldolase/adducin N-terminal domain"/>
    <property type="match status" value="1"/>
</dbReference>
<dbReference type="HAMAP" id="MF_03116">
    <property type="entry name" value="Salvage_MtnB_euk"/>
    <property type="match status" value="1"/>
</dbReference>
<dbReference type="InterPro" id="IPR001303">
    <property type="entry name" value="Aldolase_II/adducin_N"/>
</dbReference>
<dbReference type="InterPro" id="IPR036409">
    <property type="entry name" value="Aldolase_II/adducin_N_sf"/>
</dbReference>
<dbReference type="InterPro" id="IPR017714">
    <property type="entry name" value="MethylthioRu-1-P_deHdtase_MtnB"/>
</dbReference>
<dbReference type="InterPro" id="IPR027514">
    <property type="entry name" value="Salvage_MtnB_euk"/>
</dbReference>
<dbReference type="NCBIfam" id="TIGR03328">
    <property type="entry name" value="salvage_mtnB"/>
    <property type="match status" value="1"/>
</dbReference>
<dbReference type="PANTHER" id="PTHR10640">
    <property type="entry name" value="METHYLTHIORIBULOSE-1-PHOSPHATE DEHYDRATASE"/>
    <property type="match status" value="1"/>
</dbReference>
<dbReference type="PANTHER" id="PTHR10640:SF7">
    <property type="entry name" value="METHYLTHIORIBULOSE-1-PHOSPHATE DEHYDRATASE"/>
    <property type="match status" value="1"/>
</dbReference>
<dbReference type="Pfam" id="PF00596">
    <property type="entry name" value="Aldolase_II"/>
    <property type="match status" value="1"/>
</dbReference>
<dbReference type="SMART" id="SM01007">
    <property type="entry name" value="Aldolase_II"/>
    <property type="match status" value="1"/>
</dbReference>
<dbReference type="SUPFAM" id="SSF53639">
    <property type="entry name" value="AraD/HMP-PK domain-like"/>
    <property type="match status" value="1"/>
</dbReference>
<sequence>MTPPTTGLPAENTTDDNDHLVQSDDPEHPANLIPSLCAKFWTLGWVTGTGGGASIRDDDLVYLAPSGVQKELMKPSDIYVLSLAAQAQSLSRRQRVYLRSPPVYKPSQCTPLFLAAFTKRNAGCCIHTHSHWAVLVTLILEQQGSKEFRINNIEQIKGFGKGFQKSGNLGYHDTLVIPVIENTAHEEDLTEFLEEAMDKYPDTYAVLVRRHGVYVWGDNVHKAKTQCESLDYLFQLAVEMKQLGLPWITDIEPTIPTRKD</sequence>